<gene>
    <name evidence="4" type="primary">gkaG</name>
</gene>
<reference key="1">
    <citation type="journal article" date="2021" name="J. Am. Chem. Soc.">
        <title>Biosynthesis of para-cyclophane-containing hirsutellone family of fungal natural products.</title>
        <authorList>
            <person name="Ohashi M."/>
            <person name="Kakule T.B."/>
            <person name="Tang M.C."/>
            <person name="Jamieson C.S."/>
            <person name="Liu M."/>
            <person name="Zhao Y.L."/>
            <person name="Houk K.N."/>
            <person name="Tang Y."/>
        </authorList>
    </citation>
    <scope>NUCLEOTIDE SEQUENCE [GENOMIC DNA]</scope>
    <scope>FUNCTION</scope>
    <scope>PATHWAY</scope>
    <source>
        <strain>DSM 1997</strain>
    </source>
</reference>
<dbReference type="EC" id="3.7.1.-" evidence="3"/>
<dbReference type="EMBL" id="MW690135">
    <property type="protein sequence ID" value="QXF14606.1"/>
    <property type="molecule type" value="Genomic_DNA"/>
</dbReference>
<dbReference type="SMR" id="A0A8F4NU75"/>
<dbReference type="OrthoDB" id="249703at2759"/>
<dbReference type="GO" id="GO:0016787">
    <property type="term" value="F:hydrolase activity"/>
    <property type="evidence" value="ECO:0007669"/>
    <property type="project" value="UniProtKB-KW"/>
</dbReference>
<dbReference type="GO" id="GO:0017000">
    <property type="term" value="P:antibiotic biosynthetic process"/>
    <property type="evidence" value="ECO:0007669"/>
    <property type="project" value="UniProtKB-ARBA"/>
</dbReference>
<dbReference type="GO" id="GO:0072330">
    <property type="term" value="P:monocarboxylic acid biosynthetic process"/>
    <property type="evidence" value="ECO:0007669"/>
    <property type="project" value="UniProtKB-ARBA"/>
</dbReference>
<dbReference type="Gene3D" id="1.20.1440.110">
    <property type="entry name" value="acylaminoacyl peptidase"/>
    <property type="match status" value="1"/>
</dbReference>
<dbReference type="Gene3D" id="3.40.50.1820">
    <property type="entry name" value="alpha/beta hydrolase"/>
    <property type="match status" value="1"/>
</dbReference>
<dbReference type="InterPro" id="IPR029058">
    <property type="entry name" value="AB_hydrolase_fold"/>
</dbReference>
<dbReference type="InterPro" id="IPR010520">
    <property type="entry name" value="FrsA-like"/>
</dbReference>
<dbReference type="InterPro" id="IPR050261">
    <property type="entry name" value="FrsA_esterase"/>
</dbReference>
<dbReference type="PANTHER" id="PTHR22946:SF13">
    <property type="entry name" value="ALPHA_BETA HYDROLASE PSOB"/>
    <property type="match status" value="1"/>
</dbReference>
<dbReference type="PANTHER" id="PTHR22946">
    <property type="entry name" value="DIENELACTONE HYDROLASE DOMAIN-CONTAINING PROTEIN-RELATED"/>
    <property type="match status" value="1"/>
</dbReference>
<dbReference type="Pfam" id="PF06500">
    <property type="entry name" value="FrsA-like"/>
    <property type="match status" value="1"/>
</dbReference>
<dbReference type="SUPFAM" id="SSF53474">
    <property type="entry name" value="alpha/beta-Hydrolases"/>
    <property type="match status" value="1"/>
</dbReference>
<comment type="function">
    <text evidence="3 6">Alpha/beta hydrolase; part of the gene cluster that mediates the biosynthesis of GKK1032, fungal natural products containing a macrocyclic para-cyclophane connected to a decahydrofluorene ring system that show potent antitumor activities (PubMed:33834778). Within the pathway, gkaG catalyzes the Knoevenagel condensation that affords the 3-pyrrolin-2-one ring, using as substrate the polyketide-tyrosyl acyl thioester product of gkaA (PubMed:33834778). The pathway begins with the PKS-NRPS gkaA which, with the help of the trans-enoyl reductase gkaC, synthesizes the polyketide-tyrosyl acyl thioester product which can be reductively off-loaded by the terminal reductase (R) domain in gkaA. The alpha/beta hydrolase gkaG is then required to catalyze the subsequent Knoevenagel condensation that affords the 3-pyrrolin-2-one ring, whereas the three proteins gkaB, gkaX and gkaZ then function synergistically to form the cyclophane (Probable).</text>
</comment>
<comment type="pathway">
    <text evidence="3">Mycotoxin biosynthesis.</text>
</comment>
<comment type="subunit">
    <text evidence="2">Homodimer.</text>
</comment>
<comment type="similarity">
    <text evidence="5">Belongs to the AB hydrolase superfamily.</text>
</comment>
<proteinExistence type="inferred from homology"/>
<keyword id="KW-0378">Hydrolase</keyword>
<keyword id="KW-0843">Virulence</keyword>
<sequence length="427" mass="47050">MASFPFSPSFMFDFELTRILGSASSGGCEVGEFKSAVGKIKKHDAESWHAAWKEQGERAESIANEAAAAGFRIPARNAYLRASNYFRASAYMFTNSEPRVVPLSERSIANFERAAGLMDGEVMFVEIPYEEGITLTGWLCLPPKEARVEGKKPLILYAGGADATKEELYFLYGHTGPQLGYAVLCLEGPGQGMLLKKSKIPLRPDFEVVAGYVLDYFSSLAKSRPDLELDLDRIAVAGAATGGYFALRAATDARIKACVAVDPFFSMWELALTRAPQSFMKLWENGWVMDNVLDTFTDAHCRGNFQAGWEMSLGKSSMGVEKSSAMLRRFKDFSLENKKDGKILERVTCPVFLTGPGNGSEMYSSADDSTLKIKDMLKKVPADKKEIWLPSDVADGGLTAKIGAWALLAQKTFLFLDKQFEVKRKAL</sequence>
<feature type="chain" id="PRO_0000458431" description="Alpha/beta hydrolase gkaG">
    <location>
        <begin position="1"/>
        <end position="427"/>
    </location>
</feature>
<feature type="active site" evidence="1">
    <location>
        <position position="368"/>
    </location>
</feature>
<organism>
    <name type="scientific">Penicillium citrinum</name>
    <dbReference type="NCBI Taxonomy" id="5077"/>
    <lineage>
        <taxon>Eukaryota</taxon>
        <taxon>Fungi</taxon>
        <taxon>Dikarya</taxon>
        <taxon>Ascomycota</taxon>
        <taxon>Pezizomycotina</taxon>
        <taxon>Eurotiomycetes</taxon>
        <taxon>Eurotiomycetidae</taxon>
        <taxon>Eurotiales</taxon>
        <taxon>Aspergillaceae</taxon>
        <taxon>Penicillium</taxon>
    </lineage>
</organism>
<protein>
    <recommendedName>
        <fullName evidence="4">Alpha/beta hydrolase gkaG</fullName>
        <ecNumber evidence="3">3.7.1.-</ecNumber>
    </recommendedName>
    <alternativeName>
        <fullName evidence="4">GKK1032 biosynthesis cluster protein G</fullName>
    </alternativeName>
</protein>
<accession>A0A8F4NU75</accession>
<name>GKAG_PENCI</name>
<evidence type="ECO:0000250" key="1">
    <source>
        <dbReference type="UniProtKB" id="Q4WZB3"/>
    </source>
</evidence>
<evidence type="ECO:0000250" key="2">
    <source>
        <dbReference type="UniProtKB" id="Q93NG6"/>
    </source>
</evidence>
<evidence type="ECO:0000269" key="3">
    <source>
    </source>
</evidence>
<evidence type="ECO:0000303" key="4">
    <source>
    </source>
</evidence>
<evidence type="ECO:0000305" key="5"/>
<evidence type="ECO:0000305" key="6">
    <source>
    </source>
</evidence>